<keyword id="KW-0001">2Fe-2S</keyword>
<keyword id="KW-0028">Amino-acid biosynthesis</keyword>
<keyword id="KW-0100">Branched-chain amino acid biosynthesis</keyword>
<keyword id="KW-0408">Iron</keyword>
<keyword id="KW-0411">Iron-sulfur</keyword>
<keyword id="KW-0456">Lyase</keyword>
<keyword id="KW-0460">Magnesium</keyword>
<keyword id="KW-0479">Metal-binding</keyword>
<comment type="function">
    <text evidence="1">Functions in the biosynthesis of branched-chain amino acids. Catalyzes the dehydration of (2R,3R)-2,3-dihydroxy-3-methylpentanoate (2,3-dihydroxy-3-methylvalerate) into 2-oxo-3-methylpentanoate (2-oxo-3-methylvalerate) and of (2R)-2,3-dihydroxy-3-methylbutanoate (2,3-dihydroxyisovalerate) into 2-oxo-3-methylbutanoate (2-oxoisovalerate), the penultimate precursor to L-isoleucine and L-valine, respectively.</text>
</comment>
<comment type="catalytic activity">
    <reaction evidence="1">
        <text>(2R)-2,3-dihydroxy-3-methylbutanoate = 3-methyl-2-oxobutanoate + H2O</text>
        <dbReference type="Rhea" id="RHEA:24809"/>
        <dbReference type="ChEBI" id="CHEBI:11851"/>
        <dbReference type="ChEBI" id="CHEBI:15377"/>
        <dbReference type="ChEBI" id="CHEBI:49072"/>
        <dbReference type="EC" id="4.2.1.9"/>
    </reaction>
    <physiologicalReaction direction="left-to-right" evidence="1">
        <dbReference type="Rhea" id="RHEA:24810"/>
    </physiologicalReaction>
</comment>
<comment type="catalytic activity">
    <reaction evidence="1">
        <text>(2R,3R)-2,3-dihydroxy-3-methylpentanoate = (S)-3-methyl-2-oxopentanoate + H2O</text>
        <dbReference type="Rhea" id="RHEA:27694"/>
        <dbReference type="ChEBI" id="CHEBI:15377"/>
        <dbReference type="ChEBI" id="CHEBI:35146"/>
        <dbReference type="ChEBI" id="CHEBI:49258"/>
        <dbReference type="EC" id="4.2.1.9"/>
    </reaction>
    <physiologicalReaction direction="left-to-right" evidence="1">
        <dbReference type="Rhea" id="RHEA:27695"/>
    </physiologicalReaction>
</comment>
<comment type="cofactor">
    <cofactor evidence="1">
        <name>[2Fe-2S] cluster</name>
        <dbReference type="ChEBI" id="CHEBI:190135"/>
    </cofactor>
    <text evidence="1">Binds 1 [2Fe-2S] cluster per subunit. This cluster acts as a Lewis acid cofactor.</text>
</comment>
<comment type="cofactor">
    <cofactor evidence="1">
        <name>Mg(2+)</name>
        <dbReference type="ChEBI" id="CHEBI:18420"/>
    </cofactor>
</comment>
<comment type="pathway">
    <text evidence="1">Amino-acid biosynthesis; L-isoleucine biosynthesis; L-isoleucine from 2-oxobutanoate: step 3/4.</text>
</comment>
<comment type="pathway">
    <text evidence="1">Amino-acid biosynthesis; L-valine biosynthesis; L-valine from pyruvate: step 3/4.</text>
</comment>
<comment type="subunit">
    <text evidence="1">Homodimer.</text>
</comment>
<comment type="similarity">
    <text evidence="1">Belongs to the IlvD/Edd family.</text>
</comment>
<protein>
    <recommendedName>
        <fullName evidence="1">Dihydroxy-acid dehydratase</fullName>
        <shortName evidence="1">DAD</shortName>
        <ecNumber evidence="1">4.2.1.9</ecNumber>
    </recommendedName>
</protein>
<proteinExistence type="inferred from homology"/>
<feature type="chain" id="PRO_1000001079" description="Dihydroxy-acid dehydratase">
    <location>
        <begin position="1"/>
        <end position="617"/>
    </location>
</feature>
<feature type="active site" description="Proton acceptor" evidence="1">
    <location>
        <position position="517"/>
    </location>
</feature>
<feature type="binding site" evidence="1">
    <location>
        <position position="81"/>
    </location>
    <ligand>
        <name>Mg(2+)</name>
        <dbReference type="ChEBI" id="CHEBI:18420"/>
    </ligand>
</feature>
<feature type="binding site" evidence="1">
    <location>
        <position position="122"/>
    </location>
    <ligand>
        <name>[2Fe-2S] cluster</name>
        <dbReference type="ChEBI" id="CHEBI:190135"/>
    </ligand>
</feature>
<feature type="binding site" evidence="1">
    <location>
        <position position="123"/>
    </location>
    <ligand>
        <name>Mg(2+)</name>
        <dbReference type="ChEBI" id="CHEBI:18420"/>
    </ligand>
</feature>
<feature type="binding site" description="via carbamate group" evidence="1">
    <location>
        <position position="124"/>
    </location>
    <ligand>
        <name>Mg(2+)</name>
        <dbReference type="ChEBI" id="CHEBI:18420"/>
    </ligand>
</feature>
<feature type="binding site" evidence="1">
    <location>
        <position position="195"/>
    </location>
    <ligand>
        <name>[2Fe-2S] cluster</name>
        <dbReference type="ChEBI" id="CHEBI:190135"/>
    </ligand>
</feature>
<feature type="binding site" evidence="1">
    <location>
        <position position="491"/>
    </location>
    <ligand>
        <name>Mg(2+)</name>
        <dbReference type="ChEBI" id="CHEBI:18420"/>
    </ligand>
</feature>
<feature type="modified residue" description="N6-carboxylysine" evidence="1">
    <location>
        <position position="124"/>
    </location>
</feature>
<gene>
    <name evidence="1" type="primary">ilvD</name>
    <name type="ordered locus">Tcr_0599</name>
</gene>
<dbReference type="EC" id="4.2.1.9" evidence="1"/>
<dbReference type="EMBL" id="CP000109">
    <property type="protein sequence ID" value="ABB41195.1"/>
    <property type="molecule type" value="Genomic_DNA"/>
</dbReference>
<dbReference type="SMR" id="Q31I28"/>
<dbReference type="STRING" id="317025.Tcr_0599"/>
<dbReference type="KEGG" id="tcx:Tcr_0599"/>
<dbReference type="eggNOG" id="COG0129">
    <property type="taxonomic scope" value="Bacteria"/>
</dbReference>
<dbReference type="HOGENOM" id="CLU_014271_4_3_6"/>
<dbReference type="OrthoDB" id="9807077at2"/>
<dbReference type="UniPathway" id="UPA00047">
    <property type="reaction ID" value="UER00057"/>
</dbReference>
<dbReference type="UniPathway" id="UPA00049">
    <property type="reaction ID" value="UER00061"/>
</dbReference>
<dbReference type="GO" id="GO:0005829">
    <property type="term" value="C:cytosol"/>
    <property type="evidence" value="ECO:0007669"/>
    <property type="project" value="TreeGrafter"/>
</dbReference>
<dbReference type="GO" id="GO:0051537">
    <property type="term" value="F:2 iron, 2 sulfur cluster binding"/>
    <property type="evidence" value="ECO:0007669"/>
    <property type="project" value="UniProtKB-UniRule"/>
</dbReference>
<dbReference type="GO" id="GO:0004160">
    <property type="term" value="F:dihydroxy-acid dehydratase activity"/>
    <property type="evidence" value="ECO:0007669"/>
    <property type="project" value="UniProtKB-UniRule"/>
</dbReference>
<dbReference type="GO" id="GO:0000287">
    <property type="term" value="F:magnesium ion binding"/>
    <property type="evidence" value="ECO:0007669"/>
    <property type="project" value="UniProtKB-UniRule"/>
</dbReference>
<dbReference type="GO" id="GO:0009097">
    <property type="term" value="P:isoleucine biosynthetic process"/>
    <property type="evidence" value="ECO:0007669"/>
    <property type="project" value="UniProtKB-UniRule"/>
</dbReference>
<dbReference type="GO" id="GO:0009099">
    <property type="term" value="P:L-valine biosynthetic process"/>
    <property type="evidence" value="ECO:0007669"/>
    <property type="project" value="UniProtKB-UniRule"/>
</dbReference>
<dbReference type="FunFam" id="3.50.30.80:FF:000001">
    <property type="entry name" value="Dihydroxy-acid dehydratase"/>
    <property type="match status" value="1"/>
</dbReference>
<dbReference type="Gene3D" id="3.50.30.80">
    <property type="entry name" value="IlvD/EDD C-terminal domain-like"/>
    <property type="match status" value="1"/>
</dbReference>
<dbReference type="HAMAP" id="MF_00012">
    <property type="entry name" value="IlvD"/>
    <property type="match status" value="1"/>
</dbReference>
<dbReference type="InterPro" id="IPR042096">
    <property type="entry name" value="Dihydro-acid_dehy_C"/>
</dbReference>
<dbReference type="InterPro" id="IPR004404">
    <property type="entry name" value="DihydroxyA_deHydtase"/>
</dbReference>
<dbReference type="InterPro" id="IPR020558">
    <property type="entry name" value="DiOHA_6PGluconate_deHydtase_CS"/>
</dbReference>
<dbReference type="InterPro" id="IPR056740">
    <property type="entry name" value="ILV_EDD_C"/>
</dbReference>
<dbReference type="InterPro" id="IPR000581">
    <property type="entry name" value="ILV_EDD_N"/>
</dbReference>
<dbReference type="InterPro" id="IPR037237">
    <property type="entry name" value="IlvD/EDD_N"/>
</dbReference>
<dbReference type="NCBIfam" id="TIGR00110">
    <property type="entry name" value="ilvD"/>
    <property type="match status" value="1"/>
</dbReference>
<dbReference type="NCBIfam" id="NF009103">
    <property type="entry name" value="PRK12448.1"/>
    <property type="match status" value="1"/>
</dbReference>
<dbReference type="PANTHER" id="PTHR43661">
    <property type="entry name" value="D-XYLONATE DEHYDRATASE"/>
    <property type="match status" value="1"/>
</dbReference>
<dbReference type="PANTHER" id="PTHR43661:SF3">
    <property type="entry name" value="D-XYLONATE DEHYDRATASE YAGF-RELATED"/>
    <property type="match status" value="1"/>
</dbReference>
<dbReference type="Pfam" id="PF24877">
    <property type="entry name" value="ILV_EDD_C"/>
    <property type="match status" value="1"/>
</dbReference>
<dbReference type="Pfam" id="PF00920">
    <property type="entry name" value="ILVD_EDD_N"/>
    <property type="match status" value="1"/>
</dbReference>
<dbReference type="SUPFAM" id="SSF143975">
    <property type="entry name" value="IlvD/EDD N-terminal domain-like"/>
    <property type="match status" value="1"/>
</dbReference>
<dbReference type="SUPFAM" id="SSF52016">
    <property type="entry name" value="LeuD/IlvD-like"/>
    <property type="match status" value="1"/>
</dbReference>
<dbReference type="PROSITE" id="PS00886">
    <property type="entry name" value="ILVD_EDD_1"/>
    <property type="match status" value="1"/>
</dbReference>
<dbReference type="PROSITE" id="PS00887">
    <property type="entry name" value="ILVD_EDD_2"/>
    <property type="match status" value="1"/>
</dbReference>
<reference key="1">
    <citation type="journal article" date="2006" name="PLoS Biol.">
        <title>The genome of deep-sea vent chemolithoautotroph Thiomicrospira crunogena XCL-2.</title>
        <authorList>
            <person name="Scott K.M."/>
            <person name="Sievert S.M."/>
            <person name="Abril F.N."/>
            <person name="Ball L.A."/>
            <person name="Barrett C.J."/>
            <person name="Blake R.A."/>
            <person name="Boller A.J."/>
            <person name="Chain P.S.G."/>
            <person name="Clark J.A."/>
            <person name="Davis C.R."/>
            <person name="Detter C."/>
            <person name="Do K.F."/>
            <person name="Dobrinski K.P."/>
            <person name="Faza B.I."/>
            <person name="Fitzpatrick K.A."/>
            <person name="Freyermuth S.K."/>
            <person name="Harmer T.L."/>
            <person name="Hauser L.J."/>
            <person name="Huegler M."/>
            <person name="Kerfeld C.A."/>
            <person name="Klotz M.G."/>
            <person name="Kong W.W."/>
            <person name="Land M."/>
            <person name="Lapidus A."/>
            <person name="Larimer F.W."/>
            <person name="Longo D.L."/>
            <person name="Lucas S."/>
            <person name="Malfatti S.A."/>
            <person name="Massey S.E."/>
            <person name="Martin D.D."/>
            <person name="McCuddin Z."/>
            <person name="Meyer F."/>
            <person name="Moore J.L."/>
            <person name="Ocampo L.H. Jr."/>
            <person name="Paul J.H."/>
            <person name="Paulsen I.T."/>
            <person name="Reep D.K."/>
            <person name="Ren Q."/>
            <person name="Ross R.L."/>
            <person name="Sato P.Y."/>
            <person name="Thomas P."/>
            <person name="Tinkham L.E."/>
            <person name="Zeruth G.T."/>
        </authorList>
    </citation>
    <scope>NUCLEOTIDE SEQUENCE [LARGE SCALE GENOMIC DNA]</scope>
    <source>
        <strain>DSM 25203 / XCL-2</strain>
    </source>
</reference>
<evidence type="ECO:0000255" key="1">
    <source>
        <dbReference type="HAMAP-Rule" id="MF_00012"/>
    </source>
</evidence>
<sequence length="617" mass="66160">MPDYRSKTSTHGRNMAGARALWRATGMKTEDFGKPIIAVANSFTQFVPGHVHLKDMGQLVAGVIEEAGGIAKEFNTIAVDDGIAMGHDGMLYSLPSRDLIADSVEYMCNAHCADALVCISNCDKITPGMMMAAMRLNIPTIFVTGGPMESGKTVLGGMEIKLDLVDAMVMAADDHCSDSDINDVEVSACPTCGSCSGMFTANSMNCLAEALGIALPGNGTTLATHADRRHLFEEAGRRIVELAKLYYEKDDEGVLPRSIATVEAFENAMALDVAMGGSTNTVLHLLAIAREAEVNFTMADMDRISRNVPCLVKVAPNSKDYHMEDVHRAGGIMRILGELDRGELLNRDVKTVHASTMAAAIDLWDITRTDDEAVKTFYRAAPGNVRTTEAFSQNKRWKTLDDDDANGCIRSVEHAYTKEGGLAVLYGNIALDGCIVKTAGVDEEIFKFSGPARIYESQDAAVAAILGDEVKSGDVVLIRYEGPKGGPGMQEMLYPTSYLKSKGLGKECALLTDGRFSGGTSGLSIGHCSPEAAEGGNIGLVEEGDLIKIDIPNRTISVDLTDEELAERRQAMVAKGKAAWKPAEPRTRKVSAALRAYAAMTTSAAFGAVRNVEQIEH</sequence>
<accession>Q31I28</accession>
<name>ILVD_HYDCU</name>
<organism>
    <name type="scientific">Hydrogenovibrio crunogenus (strain DSM 25203 / XCL-2)</name>
    <name type="common">Thiomicrospira crunogena</name>
    <dbReference type="NCBI Taxonomy" id="317025"/>
    <lineage>
        <taxon>Bacteria</taxon>
        <taxon>Pseudomonadati</taxon>
        <taxon>Pseudomonadota</taxon>
        <taxon>Gammaproteobacteria</taxon>
        <taxon>Thiotrichales</taxon>
        <taxon>Piscirickettsiaceae</taxon>
        <taxon>Hydrogenovibrio</taxon>
    </lineage>
</organism>